<proteinExistence type="evidence at transcript level"/>
<accession>Q940Q1</accession>
<accession>O23017</accession>
<accession>O23666</accession>
<gene>
    <name type="ordered locus">At1g04680</name>
    <name type="ORF">T1G11.7</name>
    <name type="ORF">T1G11_6</name>
</gene>
<evidence type="ECO:0000250" key="1"/>
<evidence type="ECO:0000255" key="2"/>
<evidence type="ECO:0000269" key="3">
    <source>
    </source>
</evidence>
<evidence type="ECO:0000305" key="4"/>
<keyword id="KW-0106">Calcium</keyword>
<keyword id="KW-0325">Glycoprotein</keyword>
<keyword id="KW-0456">Lyase</keyword>
<keyword id="KW-0479">Metal-binding</keyword>
<keyword id="KW-1185">Reference proteome</keyword>
<keyword id="KW-0732">Signal</keyword>
<comment type="catalytic activity">
    <reaction>
        <text>Eliminative cleavage of (1-&gt;4)-alpha-D-galacturonan to give oligosaccharides with 4-deoxy-alpha-D-galact-4-enuronosyl groups at their non-reducing ends.</text>
        <dbReference type="EC" id="4.2.2.2"/>
    </reaction>
</comment>
<comment type="cofactor">
    <cofactor evidence="1">
        <name>Ca(2+)</name>
        <dbReference type="ChEBI" id="CHEBI:29108"/>
    </cofactor>
    <text evidence="1">Binds 1 Ca(2+) ion. Required for its activity.</text>
</comment>
<comment type="pathway">
    <text>Glycan metabolism; pectin degradation; 2-dehydro-3-deoxy-D-gluconate from pectin: step 2/5.</text>
</comment>
<comment type="tissue specificity">
    <text evidence="3">Expressed in flowers, but not in leaves.</text>
</comment>
<comment type="similarity">
    <text evidence="4">Belongs to the polysaccharide lyase 1 family.</text>
</comment>
<comment type="sequence caution" evidence="4">
    <conflict type="frameshift">
        <sequence resource="EMBL-CDS" id="AAL06861"/>
    </conflict>
</comment>
<comment type="sequence caution" evidence="4">
    <conflict type="frameshift">
        <sequence resource="EMBL-CDS" id="AAL47400"/>
    </conflict>
</comment>
<sequence>MAVLPTWLLAMMCLLFFVGAMENTTHDNISSLPRSDETEWNQHAVTNPDEVADEVLALTEMSVRNHTERRKLGYFTCGTGNPIDDCWRCDPNWHKNRKRLADCGIGFGRNAIGGRDGRFYVVTDPRDDNPVNPRPGTLRHAVIQDRPLWIVFKRDMVIQLKQELIVNSFKTIDGRGANVHIANGGCITIQFVTNVIVHGLHIHDCKPTGNAMVRSSETHFGWRTMADGDAISIFGSSHVWIDHNSLSHCADGLVDAVMGSTAITISNNHLTHHNEVMLLGHSDSYMRDKAMQVTIAYNHFGVGLIQRMPRCRHGYFHVVNNDYTHWEMYAIGGSANPTINSQGNRYAAPKNPFAKEVTKRVDTPASHWKGWNWRSEGDLLQNGAYFTSSGAAASGSYARASSLSAKSSSLVGHITSDAGALPCRRGRQCSS</sequence>
<protein>
    <recommendedName>
        <fullName>Probable pectate lyase 1</fullName>
        <ecNumber>4.2.2.2</ecNumber>
    </recommendedName>
    <alternativeName>
        <fullName>Pectate lyase A1</fullName>
    </alternativeName>
</protein>
<feature type="signal peptide" evidence="2">
    <location>
        <begin position="1"/>
        <end position="20"/>
    </location>
</feature>
<feature type="chain" id="PRO_0000024865" description="Probable pectate lyase 1">
    <location>
        <begin position="21"/>
        <end position="431"/>
    </location>
</feature>
<feature type="active site" evidence="2">
    <location>
        <position position="307"/>
    </location>
</feature>
<feature type="binding site" evidence="1">
    <location>
        <position position="227"/>
    </location>
    <ligand>
        <name>Ca(2+)</name>
        <dbReference type="ChEBI" id="CHEBI:29108"/>
    </ligand>
</feature>
<feature type="binding site" evidence="1">
    <location>
        <position position="251"/>
    </location>
    <ligand>
        <name>Ca(2+)</name>
        <dbReference type="ChEBI" id="CHEBI:29108"/>
    </ligand>
</feature>
<feature type="binding site" evidence="1">
    <location>
        <position position="255"/>
    </location>
    <ligand>
        <name>Ca(2+)</name>
        <dbReference type="ChEBI" id="CHEBI:29108"/>
    </ligand>
</feature>
<feature type="glycosylation site" description="N-linked (GlcNAc...) asparagine" evidence="2">
    <location>
        <position position="23"/>
    </location>
</feature>
<feature type="glycosylation site" description="N-linked (GlcNAc...) asparagine" evidence="2">
    <location>
        <position position="28"/>
    </location>
</feature>
<feature type="glycosylation site" description="N-linked (GlcNAc...) asparagine" evidence="2">
    <location>
        <position position="65"/>
    </location>
</feature>
<feature type="sequence conflict" description="In Ref. 5; AAB69760." evidence="4" ref="5">
    <original>V</original>
    <variation>I</variation>
    <location>
        <position position="151"/>
    </location>
</feature>
<feature type="sequence conflict" description="In Ref. 5; AAB69760." evidence="4" ref="5">
    <location>
        <position position="208"/>
    </location>
</feature>
<feature type="sequence conflict" description="In Ref. 5; AAB69760." evidence="4" ref="5">
    <original>DAV</original>
    <variation>ERS</variation>
    <location>
        <begin position="255"/>
        <end position="257"/>
    </location>
</feature>
<organism>
    <name type="scientific">Arabidopsis thaliana</name>
    <name type="common">Mouse-ear cress</name>
    <dbReference type="NCBI Taxonomy" id="3702"/>
    <lineage>
        <taxon>Eukaryota</taxon>
        <taxon>Viridiplantae</taxon>
        <taxon>Streptophyta</taxon>
        <taxon>Embryophyta</taxon>
        <taxon>Tracheophyta</taxon>
        <taxon>Spermatophyta</taxon>
        <taxon>Magnoliopsida</taxon>
        <taxon>eudicotyledons</taxon>
        <taxon>Gunneridae</taxon>
        <taxon>Pentapetalae</taxon>
        <taxon>rosids</taxon>
        <taxon>malvids</taxon>
        <taxon>Brassicales</taxon>
        <taxon>Brassicaceae</taxon>
        <taxon>Camelineae</taxon>
        <taxon>Arabidopsis</taxon>
    </lineage>
</organism>
<reference key="1">
    <citation type="journal article" date="2000" name="Nature">
        <title>Sequence and analysis of chromosome 1 of the plant Arabidopsis thaliana.</title>
        <authorList>
            <person name="Theologis A."/>
            <person name="Ecker J.R."/>
            <person name="Palm C.J."/>
            <person name="Federspiel N.A."/>
            <person name="Kaul S."/>
            <person name="White O."/>
            <person name="Alonso J."/>
            <person name="Altafi H."/>
            <person name="Araujo R."/>
            <person name="Bowman C.L."/>
            <person name="Brooks S.Y."/>
            <person name="Buehler E."/>
            <person name="Chan A."/>
            <person name="Chao Q."/>
            <person name="Chen H."/>
            <person name="Cheuk R.F."/>
            <person name="Chin C.W."/>
            <person name="Chung M.K."/>
            <person name="Conn L."/>
            <person name="Conway A.B."/>
            <person name="Conway A.R."/>
            <person name="Creasy T.H."/>
            <person name="Dewar K."/>
            <person name="Dunn P."/>
            <person name="Etgu P."/>
            <person name="Feldblyum T.V."/>
            <person name="Feng J.-D."/>
            <person name="Fong B."/>
            <person name="Fujii C.Y."/>
            <person name="Gill J.E."/>
            <person name="Goldsmith A.D."/>
            <person name="Haas B."/>
            <person name="Hansen N.F."/>
            <person name="Hughes B."/>
            <person name="Huizar L."/>
            <person name="Hunter J.L."/>
            <person name="Jenkins J."/>
            <person name="Johnson-Hopson C."/>
            <person name="Khan S."/>
            <person name="Khaykin E."/>
            <person name="Kim C.J."/>
            <person name="Koo H.L."/>
            <person name="Kremenetskaia I."/>
            <person name="Kurtz D.B."/>
            <person name="Kwan A."/>
            <person name="Lam B."/>
            <person name="Langin-Hooper S."/>
            <person name="Lee A."/>
            <person name="Lee J.M."/>
            <person name="Lenz C.A."/>
            <person name="Li J.H."/>
            <person name="Li Y.-P."/>
            <person name="Lin X."/>
            <person name="Liu S.X."/>
            <person name="Liu Z.A."/>
            <person name="Luros J.S."/>
            <person name="Maiti R."/>
            <person name="Marziali A."/>
            <person name="Militscher J."/>
            <person name="Miranda M."/>
            <person name="Nguyen M."/>
            <person name="Nierman W.C."/>
            <person name="Osborne B.I."/>
            <person name="Pai G."/>
            <person name="Peterson J."/>
            <person name="Pham P.K."/>
            <person name="Rizzo M."/>
            <person name="Rooney T."/>
            <person name="Rowley D."/>
            <person name="Sakano H."/>
            <person name="Salzberg S.L."/>
            <person name="Schwartz J.R."/>
            <person name="Shinn P."/>
            <person name="Southwick A.M."/>
            <person name="Sun H."/>
            <person name="Tallon L.J."/>
            <person name="Tambunga G."/>
            <person name="Toriumi M.J."/>
            <person name="Town C.D."/>
            <person name="Utterback T."/>
            <person name="Van Aken S."/>
            <person name="Vaysberg M."/>
            <person name="Vysotskaia V.S."/>
            <person name="Walker M."/>
            <person name="Wu D."/>
            <person name="Yu G."/>
            <person name="Fraser C.M."/>
            <person name="Venter J.C."/>
            <person name="Davis R.W."/>
        </authorList>
    </citation>
    <scope>NUCLEOTIDE SEQUENCE [LARGE SCALE GENOMIC DNA]</scope>
    <source>
        <strain>cv. Columbia</strain>
    </source>
</reference>
<reference key="2">
    <citation type="journal article" date="2017" name="Plant J.">
        <title>Araport11: a complete reannotation of the Arabidopsis thaliana reference genome.</title>
        <authorList>
            <person name="Cheng C.Y."/>
            <person name="Krishnakumar V."/>
            <person name="Chan A.P."/>
            <person name="Thibaud-Nissen F."/>
            <person name="Schobel S."/>
            <person name="Town C.D."/>
        </authorList>
    </citation>
    <scope>GENOME REANNOTATION</scope>
    <source>
        <strain>cv. Columbia</strain>
    </source>
</reference>
<reference key="3">
    <citation type="journal article" date="2003" name="Science">
        <title>Empirical analysis of transcriptional activity in the Arabidopsis genome.</title>
        <authorList>
            <person name="Yamada K."/>
            <person name="Lim J."/>
            <person name="Dale J.M."/>
            <person name="Chen H."/>
            <person name="Shinn P."/>
            <person name="Palm C.J."/>
            <person name="Southwick A.M."/>
            <person name="Wu H.C."/>
            <person name="Kim C.J."/>
            <person name="Nguyen M."/>
            <person name="Pham P.K."/>
            <person name="Cheuk R.F."/>
            <person name="Karlin-Newmann G."/>
            <person name="Liu S.X."/>
            <person name="Lam B."/>
            <person name="Sakano H."/>
            <person name="Wu T."/>
            <person name="Yu G."/>
            <person name="Miranda M."/>
            <person name="Quach H.L."/>
            <person name="Tripp M."/>
            <person name="Chang C.H."/>
            <person name="Lee J.M."/>
            <person name="Toriumi M.J."/>
            <person name="Chan M.M."/>
            <person name="Tang C.C."/>
            <person name="Onodera C.S."/>
            <person name="Deng J.M."/>
            <person name="Akiyama K."/>
            <person name="Ansari Y."/>
            <person name="Arakawa T."/>
            <person name="Banh J."/>
            <person name="Banno F."/>
            <person name="Bowser L."/>
            <person name="Brooks S.Y."/>
            <person name="Carninci P."/>
            <person name="Chao Q."/>
            <person name="Choy N."/>
            <person name="Enju A."/>
            <person name="Goldsmith A.D."/>
            <person name="Gurjal M."/>
            <person name="Hansen N.F."/>
            <person name="Hayashizaki Y."/>
            <person name="Johnson-Hopson C."/>
            <person name="Hsuan V.W."/>
            <person name="Iida K."/>
            <person name="Karnes M."/>
            <person name="Khan S."/>
            <person name="Koesema E."/>
            <person name="Ishida J."/>
            <person name="Jiang P.X."/>
            <person name="Jones T."/>
            <person name="Kawai J."/>
            <person name="Kamiya A."/>
            <person name="Meyers C."/>
            <person name="Nakajima M."/>
            <person name="Narusaka M."/>
            <person name="Seki M."/>
            <person name="Sakurai T."/>
            <person name="Satou M."/>
            <person name="Tamse R."/>
            <person name="Vaysberg M."/>
            <person name="Wallender E.K."/>
            <person name="Wong C."/>
            <person name="Yamamura Y."/>
            <person name="Yuan S."/>
            <person name="Shinozaki K."/>
            <person name="Davis R.W."/>
            <person name="Theologis A."/>
            <person name="Ecker J.R."/>
        </authorList>
    </citation>
    <scope>NUCLEOTIDE SEQUENCE [LARGE SCALE MRNA]</scope>
    <source>
        <strain>cv. Columbia</strain>
    </source>
</reference>
<reference key="4">
    <citation type="submission" date="2002-03" db="EMBL/GenBank/DDBJ databases">
        <title>Full-length cDNA from Arabidopsis thaliana.</title>
        <authorList>
            <person name="Brover V.V."/>
            <person name="Troukhan M.E."/>
            <person name="Alexandrov N.A."/>
            <person name="Lu Y.-P."/>
            <person name="Flavell R.B."/>
            <person name="Feldmann K.A."/>
        </authorList>
    </citation>
    <scope>NUCLEOTIDE SEQUENCE [LARGE SCALE MRNA]</scope>
</reference>
<reference key="5">
    <citation type="journal article" date="1997" name="Plant Mol. Biol.">
        <title>Identification of the tobacco and Arabidopsis homologues of the pollen-expressed LAT59 gene of tomato.</title>
        <authorList>
            <person name="Kulikauskas R."/>
            <person name="McCormick S."/>
        </authorList>
    </citation>
    <scope>NUCLEOTIDE SEQUENCE [GENOMIC DNA] OF 94-275</scope>
    <scope>TISSUE SPECIFICITY</scope>
</reference>
<name>PLY1_ARATH</name>
<dbReference type="EC" id="4.2.2.2"/>
<dbReference type="EMBL" id="AC002376">
    <property type="protein sequence ID" value="AAB80622.1"/>
    <property type="molecule type" value="Genomic_DNA"/>
</dbReference>
<dbReference type="EMBL" id="CP002684">
    <property type="protein sequence ID" value="AEE27732.1"/>
    <property type="molecule type" value="Genomic_DNA"/>
</dbReference>
<dbReference type="EMBL" id="AY065034">
    <property type="protein sequence ID" value="AAL57671.1"/>
    <property type="molecule type" value="mRNA"/>
</dbReference>
<dbReference type="EMBL" id="AY054200">
    <property type="protein sequence ID" value="AAL06861.1"/>
    <property type="status" value="ALT_FRAME"/>
    <property type="molecule type" value="mRNA"/>
</dbReference>
<dbReference type="EMBL" id="AY066033">
    <property type="protein sequence ID" value="AAL47400.1"/>
    <property type="status" value="ALT_FRAME"/>
    <property type="molecule type" value="mRNA"/>
</dbReference>
<dbReference type="EMBL" id="AY087724">
    <property type="protein sequence ID" value="AAM65261.1"/>
    <property type="molecule type" value="mRNA"/>
</dbReference>
<dbReference type="EMBL" id="U83620">
    <property type="protein sequence ID" value="AAB69760.1"/>
    <property type="molecule type" value="Genomic_DNA"/>
</dbReference>
<dbReference type="PIR" id="F86179">
    <property type="entry name" value="F86179"/>
</dbReference>
<dbReference type="RefSeq" id="NP_563715.1">
    <property type="nucleotide sequence ID" value="NM_100348.4"/>
</dbReference>
<dbReference type="SMR" id="Q940Q1"/>
<dbReference type="BioGRID" id="24687">
    <property type="interactions" value="1"/>
</dbReference>
<dbReference type="FunCoup" id="Q940Q1">
    <property type="interactions" value="108"/>
</dbReference>
<dbReference type="STRING" id="3702.Q940Q1"/>
<dbReference type="CAZy" id="PL1">
    <property type="family name" value="Polysaccharide Lyase Family 1"/>
</dbReference>
<dbReference type="GlyGen" id="Q940Q1">
    <property type="glycosylation" value="3 sites"/>
</dbReference>
<dbReference type="PaxDb" id="3702-AT1G04680.1"/>
<dbReference type="ProteomicsDB" id="226148"/>
<dbReference type="EnsemblPlants" id="AT1G04680.1">
    <property type="protein sequence ID" value="AT1G04680.1"/>
    <property type="gene ID" value="AT1G04680"/>
</dbReference>
<dbReference type="GeneID" id="839452"/>
<dbReference type="Gramene" id="AT1G04680.1">
    <property type="protein sequence ID" value="AT1G04680.1"/>
    <property type="gene ID" value="AT1G04680"/>
</dbReference>
<dbReference type="KEGG" id="ath:AT1G04680"/>
<dbReference type="Araport" id="AT1G04680"/>
<dbReference type="TAIR" id="AT1G04680"/>
<dbReference type="eggNOG" id="ENOG502QQ5F">
    <property type="taxonomic scope" value="Eukaryota"/>
</dbReference>
<dbReference type="HOGENOM" id="CLU_026608_0_1_1"/>
<dbReference type="InParanoid" id="Q940Q1"/>
<dbReference type="OMA" id="GWNWRSS"/>
<dbReference type="OrthoDB" id="1637350at2759"/>
<dbReference type="PhylomeDB" id="Q940Q1"/>
<dbReference type="BioCyc" id="ARA:AT1G04680-MONOMER"/>
<dbReference type="UniPathway" id="UPA00545">
    <property type="reaction ID" value="UER00824"/>
</dbReference>
<dbReference type="PRO" id="PR:Q940Q1"/>
<dbReference type="Proteomes" id="UP000006548">
    <property type="component" value="Chromosome 1"/>
</dbReference>
<dbReference type="ExpressionAtlas" id="Q940Q1">
    <property type="expression patterns" value="baseline and differential"/>
</dbReference>
<dbReference type="GO" id="GO:0046872">
    <property type="term" value="F:metal ion binding"/>
    <property type="evidence" value="ECO:0007669"/>
    <property type="project" value="UniProtKB-KW"/>
</dbReference>
<dbReference type="GO" id="GO:0030570">
    <property type="term" value="F:pectate lyase activity"/>
    <property type="evidence" value="ECO:0007669"/>
    <property type="project" value="UniProtKB-EC"/>
</dbReference>
<dbReference type="GO" id="GO:0045490">
    <property type="term" value="P:pectin catabolic process"/>
    <property type="evidence" value="ECO:0007669"/>
    <property type="project" value="UniProtKB-UniPathway"/>
</dbReference>
<dbReference type="FunFam" id="2.160.20.10:FF:000009">
    <property type="entry name" value="Pectate lyase"/>
    <property type="match status" value="1"/>
</dbReference>
<dbReference type="Gene3D" id="2.160.20.10">
    <property type="entry name" value="Single-stranded right-handed beta-helix, Pectin lyase-like"/>
    <property type="match status" value="1"/>
</dbReference>
<dbReference type="InterPro" id="IPR018082">
    <property type="entry name" value="AmbAllergen"/>
</dbReference>
<dbReference type="InterPro" id="IPR002022">
    <property type="entry name" value="Pec_lyase"/>
</dbReference>
<dbReference type="InterPro" id="IPR012334">
    <property type="entry name" value="Pectin_lyas_fold"/>
</dbReference>
<dbReference type="InterPro" id="IPR011050">
    <property type="entry name" value="Pectin_lyase_fold/virulence"/>
</dbReference>
<dbReference type="InterPro" id="IPR045032">
    <property type="entry name" value="PEL"/>
</dbReference>
<dbReference type="PANTHER" id="PTHR31683:SF130">
    <property type="entry name" value="PECTATE LYASE 1-RELATED"/>
    <property type="match status" value="1"/>
</dbReference>
<dbReference type="PANTHER" id="PTHR31683">
    <property type="entry name" value="PECTATE LYASE 18-RELATED"/>
    <property type="match status" value="1"/>
</dbReference>
<dbReference type="Pfam" id="PF00544">
    <property type="entry name" value="Pectate_lyase_4"/>
    <property type="match status" value="1"/>
</dbReference>
<dbReference type="PRINTS" id="PR00807">
    <property type="entry name" value="AMBALLERGEN"/>
</dbReference>
<dbReference type="SMART" id="SM00656">
    <property type="entry name" value="Amb_all"/>
    <property type="match status" value="1"/>
</dbReference>
<dbReference type="SUPFAM" id="SSF51126">
    <property type="entry name" value="Pectin lyase-like"/>
    <property type="match status" value="1"/>
</dbReference>